<organism>
    <name type="scientific">Solanum lycopersicum</name>
    <name type="common">Tomato</name>
    <name type="synonym">Lycopersicon esculentum</name>
    <dbReference type="NCBI Taxonomy" id="4081"/>
    <lineage>
        <taxon>Eukaryota</taxon>
        <taxon>Viridiplantae</taxon>
        <taxon>Streptophyta</taxon>
        <taxon>Embryophyta</taxon>
        <taxon>Tracheophyta</taxon>
        <taxon>Spermatophyta</taxon>
        <taxon>Magnoliopsida</taxon>
        <taxon>eudicotyledons</taxon>
        <taxon>Gunneridae</taxon>
        <taxon>Pentapetalae</taxon>
        <taxon>asterids</taxon>
        <taxon>lamiids</taxon>
        <taxon>Solanales</taxon>
        <taxon>Solanaceae</taxon>
        <taxon>Solanoideae</taxon>
        <taxon>Solaneae</taxon>
        <taxon>Solanum</taxon>
        <taxon>Solanum subgen. Lycopersicon</taxon>
    </lineage>
</organism>
<protein>
    <recommendedName>
        <fullName evidence="1">Cytochrome b6-f complex subunit 5</fullName>
    </recommendedName>
    <alternativeName>
        <fullName evidence="1">Cytochrome b6-f complex subunit PetG</fullName>
    </alternativeName>
    <alternativeName>
        <fullName evidence="1">Cytochrome b6-f complex subunit V</fullName>
    </alternativeName>
</protein>
<name>PETG_SOLLC</name>
<evidence type="ECO:0000255" key="1">
    <source>
        <dbReference type="HAMAP-Rule" id="MF_00432"/>
    </source>
</evidence>
<reference key="1">
    <citation type="journal article" date="2006" name="Theor. Appl. Genet.">
        <title>Complete chloroplast genome sequences of Solanum bulbocastanum, Solanum lycopersicum and comparative analyses with other Solanaceae genomes.</title>
        <authorList>
            <person name="Daniell H."/>
            <person name="Lee S.-B."/>
            <person name="Grevich J."/>
            <person name="Saski C."/>
            <person name="Quesada-Vargas T."/>
            <person name="Guda C."/>
            <person name="Tomkins J."/>
            <person name="Jansen R.K."/>
        </authorList>
    </citation>
    <scope>NUCLEOTIDE SEQUENCE [LARGE SCALE GENOMIC DNA]</scope>
    <source>
        <strain>cv. LA3023</strain>
    </source>
</reference>
<reference key="2">
    <citation type="journal article" date="2006" name="J. Mol. Evol.">
        <title>Sequence of the tomato chloroplast DNA and evolutionary comparison of solanaceous plastid genomes.</title>
        <authorList>
            <person name="Kahlau S."/>
            <person name="Aspinall S."/>
            <person name="Gray J.C."/>
            <person name="Bock R."/>
        </authorList>
    </citation>
    <scope>NUCLEOTIDE SEQUENCE [LARGE SCALE GENOMIC DNA]</scope>
    <source>
        <strain>cv. IPA-6</strain>
    </source>
</reference>
<dbReference type="EMBL" id="DQ347959">
    <property type="protein sequence ID" value="ABC56319.1"/>
    <property type="molecule type" value="Genomic_DNA"/>
</dbReference>
<dbReference type="EMBL" id="AM087200">
    <property type="protein sequence ID" value="CAJ32412.1"/>
    <property type="molecule type" value="Genomic_DNA"/>
</dbReference>
<dbReference type="RefSeq" id="AP_004947.1">
    <property type="nucleotide sequence ID" value="AC_000188.1"/>
</dbReference>
<dbReference type="RefSeq" id="YP_008563107.1">
    <property type="nucleotide sequence ID" value="NC_007898.3"/>
</dbReference>
<dbReference type="SMR" id="Q2MI81"/>
<dbReference type="FunCoup" id="Q2MI81">
    <property type="interactions" value="38"/>
</dbReference>
<dbReference type="STRING" id="4081.Q2MI81"/>
<dbReference type="PaxDb" id="4081-Solyc01g007430.2.1"/>
<dbReference type="GeneID" id="3950375"/>
<dbReference type="KEGG" id="sly:3950375"/>
<dbReference type="eggNOG" id="ENOG502SD3G">
    <property type="taxonomic scope" value="Eukaryota"/>
</dbReference>
<dbReference type="InParanoid" id="Q2MI81"/>
<dbReference type="OrthoDB" id="35473at2759"/>
<dbReference type="Proteomes" id="UP000004994">
    <property type="component" value="Chloroplast"/>
</dbReference>
<dbReference type="GO" id="GO:0009535">
    <property type="term" value="C:chloroplast thylakoid membrane"/>
    <property type="evidence" value="ECO:0007669"/>
    <property type="project" value="UniProtKB-SubCell"/>
</dbReference>
<dbReference type="GO" id="GO:0009512">
    <property type="term" value="C:cytochrome b6f complex"/>
    <property type="evidence" value="ECO:0007669"/>
    <property type="project" value="InterPro"/>
</dbReference>
<dbReference type="GO" id="GO:0045158">
    <property type="term" value="F:electron transporter, transferring electrons within cytochrome b6/f complex of photosystem II activity"/>
    <property type="evidence" value="ECO:0007669"/>
    <property type="project" value="UniProtKB-UniRule"/>
</dbReference>
<dbReference type="GO" id="GO:0017004">
    <property type="term" value="P:cytochrome complex assembly"/>
    <property type="evidence" value="ECO:0007669"/>
    <property type="project" value="UniProtKB-UniRule"/>
</dbReference>
<dbReference type="GO" id="GO:0015979">
    <property type="term" value="P:photosynthesis"/>
    <property type="evidence" value="ECO:0007669"/>
    <property type="project" value="UniProtKB-KW"/>
</dbReference>
<dbReference type="HAMAP" id="MF_00432">
    <property type="entry name" value="Cytb6_f_PetG"/>
    <property type="match status" value="1"/>
</dbReference>
<dbReference type="InterPro" id="IPR003683">
    <property type="entry name" value="Cyt_6/f_cplx_su5"/>
</dbReference>
<dbReference type="InterPro" id="IPR036099">
    <property type="entry name" value="Cyt_6/f_cplx_su5_sf"/>
</dbReference>
<dbReference type="NCBIfam" id="NF001907">
    <property type="entry name" value="PRK00665.1"/>
    <property type="match status" value="1"/>
</dbReference>
<dbReference type="Pfam" id="PF02529">
    <property type="entry name" value="PetG"/>
    <property type="match status" value="1"/>
</dbReference>
<dbReference type="PIRSF" id="PIRSF000034">
    <property type="entry name" value="Cyt_b6-f_V"/>
    <property type="match status" value="1"/>
</dbReference>
<dbReference type="SUPFAM" id="SSF103446">
    <property type="entry name" value="PetG subunit of the cytochrome b6f complex"/>
    <property type="match status" value="1"/>
</dbReference>
<gene>
    <name evidence="1" type="primary">petG</name>
</gene>
<geneLocation type="chloroplast"/>
<proteinExistence type="inferred from homology"/>
<comment type="function">
    <text evidence="1">Component of the cytochrome b6-f complex, which mediates electron transfer between photosystem II (PSII) and photosystem I (PSI), cyclic electron flow around PSI, and state transitions. PetG is required for either the stability or assembly of the cytochrome b6-f complex.</text>
</comment>
<comment type="subunit">
    <text evidence="1">The 4 large subunits of the cytochrome b6-f complex are cytochrome b6, subunit IV (17 kDa polypeptide, PetD), cytochrome f and the Rieske protein, while the 4 small subunits are PetG, PetL, PetM and PetN. The complex functions as a dimer.</text>
</comment>
<comment type="subcellular location">
    <subcellularLocation>
        <location evidence="1">Plastid</location>
        <location evidence="1">Chloroplast thylakoid membrane</location>
        <topology evidence="1">Single-pass membrane protein</topology>
    </subcellularLocation>
</comment>
<comment type="similarity">
    <text evidence="1">Belongs to the PetG family.</text>
</comment>
<keyword id="KW-0150">Chloroplast</keyword>
<keyword id="KW-0249">Electron transport</keyword>
<keyword id="KW-0472">Membrane</keyword>
<keyword id="KW-0602">Photosynthesis</keyword>
<keyword id="KW-0934">Plastid</keyword>
<keyword id="KW-1185">Reference proteome</keyword>
<keyword id="KW-0793">Thylakoid</keyword>
<keyword id="KW-0812">Transmembrane</keyword>
<keyword id="KW-1133">Transmembrane helix</keyword>
<keyword id="KW-0813">Transport</keyword>
<feature type="chain" id="PRO_0000275508" description="Cytochrome b6-f complex subunit 5">
    <location>
        <begin position="1"/>
        <end position="37"/>
    </location>
</feature>
<feature type="transmembrane region" description="Helical" evidence="1">
    <location>
        <begin position="5"/>
        <end position="25"/>
    </location>
</feature>
<accession>Q2MI81</accession>
<sequence length="37" mass="4170">MIEVFLFGIVLGLIPITLAGLFVTAYLQYRRGDQLDL</sequence>